<evidence type="ECO:0000255" key="1">
    <source>
        <dbReference type="HAMAP-Rule" id="MF_00244"/>
    </source>
</evidence>
<reference key="1">
    <citation type="submission" date="2007-08" db="EMBL/GenBank/DDBJ databases">
        <title>Complete sequence of Thermotoga lettingae TMO.</title>
        <authorList>
            <consortium name="US DOE Joint Genome Institute"/>
            <person name="Copeland A."/>
            <person name="Lucas S."/>
            <person name="Lapidus A."/>
            <person name="Barry K."/>
            <person name="Glavina del Rio T."/>
            <person name="Dalin E."/>
            <person name="Tice H."/>
            <person name="Pitluck S."/>
            <person name="Foster B."/>
            <person name="Bruce D."/>
            <person name="Schmutz J."/>
            <person name="Larimer F."/>
            <person name="Land M."/>
            <person name="Hauser L."/>
            <person name="Kyrpides N."/>
            <person name="Mikhailova N."/>
            <person name="Nelson K."/>
            <person name="Gogarten J.P."/>
            <person name="Noll K."/>
            <person name="Richardson P."/>
        </authorList>
    </citation>
    <scope>NUCLEOTIDE SEQUENCE [LARGE SCALE GENOMIC DNA]</scope>
    <source>
        <strain>ATCC BAA-301 / DSM 14385 / NBRC 107922 / TMO</strain>
    </source>
</reference>
<name>NADD_PSELT</name>
<comment type="function">
    <text evidence="1">Catalyzes the reversible adenylation of nicotinate mononucleotide (NaMN) to nicotinic acid adenine dinucleotide (NaAD).</text>
</comment>
<comment type="catalytic activity">
    <reaction evidence="1">
        <text>nicotinate beta-D-ribonucleotide + ATP + H(+) = deamido-NAD(+) + diphosphate</text>
        <dbReference type="Rhea" id="RHEA:22860"/>
        <dbReference type="ChEBI" id="CHEBI:15378"/>
        <dbReference type="ChEBI" id="CHEBI:30616"/>
        <dbReference type="ChEBI" id="CHEBI:33019"/>
        <dbReference type="ChEBI" id="CHEBI:57502"/>
        <dbReference type="ChEBI" id="CHEBI:58437"/>
        <dbReference type="EC" id="2.7.7.18"/>
    </reaction>
</comment>
<comment type="pathway">
    <text evidence="1">Cofactor biosynthesis; NAD(+) biosynthesis; deamido-NAD(+) from nicotinate D-ribonucleotide: step 1/1.</text>
</comment>
<comment type="similarity">
    <text evidence="1">Belongs to the NadD family.</text>
</comment>
<dbReference type="EC" id="2.7.7.18" evidence="1"/>
<dbReference type="EMBL" id="CP000812">
    <property type="protein sequence ID" value="ABV32963.1"/>
    <property type="molecule type" value="Genomic_DNA"/>
</dbReference>
<dbReference type="RefSeq" id="WP_012002444.1">
    <property type="nucleotide sequence ID" value="NZ_BSDV01000001.1"/>
</dbReference>
<dbReference type="SMR" id="A8F479"/>
<dbReference type="STRING" id="416591.Tlet_0396"/>
<dbReference type="KEGG" id="tle:Tlet_0396"/>
<dbReference type="eggNOG" id="COG1057">
    <property type="taxonomic scope" value="Bacteria"/>
</dbReference>
<dbReference type="HOGENOM" id="CLU_069765_3_1_0"/>
<dbReference type="OrthoDB" id="5295945at2"/>
<dbReference type="UniPathway" id="UPA00253">
    <property type="reaction ID" value="UER00332"/>
</dbReference>
<dbReference type="Proteomes" id="UP000002016">
    <property type="component" value="Chromosome"/>
</dbReference>
<dbReference type="GO" id="GO:0005524">
    <property type="term" value="F:ATP binding"/>
    <property type="evidence" value="ECO:0007669"/>
    <property type="project" value="UniProtKB-KW"/>
</dbReference>
<dbReference type="GO" id="GO:0004515">
    <property type="term" value="F:nicotinate-nucleotide adenylyltransferase activity"/>
    <property type="evidence" value="ECO:0007669"/>
    <property type="project" value="UniProtKB-UniRule"/>
</dbReference>
<dbReference type="GO" id="GO:0009435">
    <property type="term" value="P:NAD biosynthetic process"/>
    <property type="evidence" value="ECO:0007669"/>
    <property type="project" value="UniProtKB-UniRule"/>
</dbReference>
<dbReference type="CDD" id="cd02165">
    <property type="entry name" value="NMNAT"/>
    <property type="match status" value="1"/>
</dbReference>
<dbReference type="Gene3D" id="3.40.50.620">
    <property type="entry name" value="HUPs"/>
    <property type="match status" value="1"/>
</dbReference>
<dbReference type="HAMAP" id="MF_00244">
    <property type="entry name" value="NaMN_adenylyltr"/>
    <property type="match status" value="1"/>
</dbReference>
<dbReference type="InterPro" id="IPR004821">
    <property type="entry name" value="Cyt_trans-like"/>
</dbReference>
<dbReference type="InterPro" id="IPR005248">
    <property type="entry name" value="NadD/NMNAT"/>
</dbReference>
<dbReference type="InterPro" id="IPR014729">
    <property type="entry name" value="Rossmann-like_a/b/a_fold"/>
</dbReference>
<dbReference type="NCBIfam" id="TIGR00482">
    <property type="entry name" value="nicotinate (nicotinamide) nucleotide adenylyltransferase"/>
    <property type="match status" value="1"/>
</dbReference>
<dbReference type="PANTHER" id="PTHR39321">
    <property type="entry name" value="NICOTINATE-NUCLEOTIDE ADENYLYLTRANSFERASE-RELATED"/>
    <property type="match status" value="1"/>
</dbReference>
<dbReference type="PANTHER" id="PTHR39321:SF3">
    <property type="entry name" value="PHOSPHOPANTETHEINE ADENYLYLTRANSFERASE"/>
    <property type="match status" value="1"/>
</dbReference>
<dbReference type="Pfam" id="PF01467">
    <property type="entry name" value="CTP_transf_like"/>
    <property type="match status" value="1"/>
</dbReference>
<dbReference type="SUPFAM" id="SSF52374">
    <property type="entry name" value="Nucleotidylyl transferase"/>
    <property type="match status" value="1"/>
</dbReference>
<proteinExistence type="inferred from homology"/>
<protein>
    <recommendedName>
        <fullName evidence="1">Probable nicotinate-nucleotide adenylyltransferase</fullName>
        <ecNumber evidence="1">2.7.7.18</ecNumber>
    </recommendedName>
    <alternativeName>
        <fullName evidence="1">Deamido-NAD(+) diphosphorylase</fullName>
    </alternativeName>
    <alternativeName>
        <fullName evidence="1">Deamido-NAD(+) pyrophosphorylase</fullName>
    </alternativeName>
    <alternativeName>
        <fullName evidence="1">Nicotinate mononucleotide adenylyltransferase</fullName>
        <shortName evidence="1">NaMN adenylyltransferase</shortName>
    </alternativeName>
</protein>
<accession>A8F479</accession>
<gene>
    <name evidence="1" type="primary">nadD</name>
    <name type="ordered locus">Tlet_0396</name>
</gene>
<organism>
    <name type="scientific">Pseudothermotoga lettingae (strain ATCC BAA-301 / DSM 14385 / NBRC 107922 / TMO)</name>
    <name type="common">Thermotoga lettingae</name>
    <dbReference type="NCBI Taxonomy" id="416591"/>
    <lineage>
        <taxon>Bacteria</taxon>
        <taxon>Thermotogati</taxon>
        <taxon>Thermotogota</taxon>
        <taxon>Thermotogae</taxon>
        <taxon>Thermotogales</taxon>
        <taxon>Thermotogaceae</taxon>
        <taxon>Pseudothermotoga</taxon>
    </lineage>
</organism>
<feature type="chain" id="PRO_0000336744" description="Probable nicotinate-nucleotide adenylyltransferase">
    <location>
        <begin position="1"/>
        <end position="197"/>
    </location>
</feature>
<keyword id="KW-0067">ATP-binding</keyword>
<keyword id="KW-0520">NAD</keyword>
<keyword id="KW-0547">Nucleotide-binding</keyword>
<keyword id="KW-0548">Nucleotidyltransferase</keyword>
<keyword id="KW-0662">Pyridine nucleotide biosynthesis</keyword>
<keyword id="KW-1185">Reference proteome</keyword>
<keyword id="KW-0808">Transferase</keyword>
<sequence length="197" mass="23311">MNTKNKIGIFGGSFNPPHIGHLIISQYAIEMLQLDLLYIVPTYIPPHKSNDLAPFELRFKWCKITFSGPHISISDYEKNRQGISYSLYTVLYFSQLHRTKPYFITGEDSLSYIQNWHKYRDLLENCHFVVYPRYCNKPYEEHTRSVLKELYDSIIFLQAPLIQISASDIRKRIKERKSIKGMVHPQIEKQVIEYYSL</sequence>